<feature type="chain" id="PRO_0000328696" description="Putative peptide import ATP-binding protein BAB2_0818">
    <location>
        <begin position="1"/>
        <end position="317"/>
    </location>
</feature>
<feature type="domain" description="ABC transporter" evidence="2">
    <location>
        <begin position="7"/>
        <end position="250"/>
    </location>
</feature>
<feature type="binding site" evidence="2">
    <location>
        <begin position="43"/>
        <end position="50"/>
    </location>
    <ligand>
        <name>ATP</name>
        <dbReference type="ChEBI" id="CHEBI:30616"/>
    </ligand>
</feature>
<dbReference type="EC" id="7.4.2.-"/>
<dbReference type="EMBL" id="AM040265">
    <property type="protein sequence ID" value="CAJ12984.1"/>
    <property type="molecule type" value="Genomic_DNA"/>
</dbReference>
<dbReference type="RefSeq" id="WP_002966203.1">
    <property type="nucleotide sequence ID" value="NZ_KN046823.1"/>
</dbReference>
<dbReference type="SMR" id="Q2YK62"/>
<dbReference type="STRING" id="359391.BAB2_0818"/>
<dbReference type="KEGG" id="bmf:BAB2_0818"/>
<dbReference type="PATRIC" id="fig|359391.11.peg.509"/>
<dbReference type="HOGENOM" id="CLU_000604_1_23_5"/>
<dbReference type="Proteomes" id="UP000002719">
    <property type="component" value="Chromosome II"/>
</dbReference>
<dbReference type="GO" id="GO:0005886">
    <property type="term" value="C:plasma membrane"/>
    <property type="evidence" value="ECO:0007669"/>
    <property type="project" value="UniProtKB-SubCell"/>
</dbReference>
<dbReference type="GO" id="GO:0005524">
    <property type="term" value="F:ATP binding"/>
    <property type="evidence" value="ECO:0007669"/>
    <property type="project" value="UniProtKB-KW"/>
</dbReference>
<dbReference type="GO" id="GO:0016887">
    <property type="term" value="F:ATP hydrolysis activity"/>
    <property type="evidence" value="ECO:0007669"/>
    <property type="project" value="InterPro"/>
</dbReference>
<dbReference type="GO" id="GO:0015833">
    <property type="term" value="P:peptide transport"/>
    <property type="evidence" value="ECO:0007669"/>
    <property type="project" value="UniProtKB-KW"/>
</dbReference>
<dbReference type="GO" id="GO:0015031">
    <property type="term" value="P:protein transport"/>
    <property type="evidence" value="ECO:0007669"/>
    <property type="project" value="UniProtKB-KW"/>
</dbReference>
<dbReference type="GO" id="GO:0055085">
    <property type="term" value="P:transmembrane transport"/>
    <property type="evidence" value="ECO:0007669"/>
    <property type="project" value="UniProtKB-ARBA"/>
</dbReference>
<dbReference type="CDD" id="cd03257">
    <property type="entry name" value="ABC_NikE_OppD_transporters"/>
    <property type="match status" value="1"/>
</dbReference>
<dbReference type="FunFam" id="3.40.50.300:FF:000016">
    <property type="entry name" value="Oligopeptide ABC transporter ATP-binding component"/>
    <property type="match status" value="1"/>
</dbReference>
<dbReference type="Gene3D" id="3.40.50.300">
    <property type="entry name" value="P-loop containing nucleotide triphosphate hydrolases"/>
    <property type="match status" value="1"/>
</dbReference>
<dbReference type="InterPro" id="IPR003593">
    <property type="entry name" value="AAA+_ATPase"/>
</dbReference>
<dbReference type="InterPro" id="IPR050319">
    <property type="entry name" value="ABC_transp_ATP-bind"/>
</dbReference>
<dbReference type="InterPro" id="IPR003439">
    <property type="entry name" value="ABC_transporter-like_ATP-bd"/>
</dbReference>
<dbReference type="InterPro" id="IPR017871">
    <property type="entry name" value="ABC_transporter-like_CS"/>
</dbReference>
<dbReference type="InterPro" id="IPR013563">
    <property type="entry name" value="Oligopep_ABC_C"/>
</dbReference>
<dbReference type="InterPro" id="IPR027417">
    <property type="entry name" value="P-loop_NTPase"/>
</dbReference>
<dbReference type="NCBIfam" id="TIGR01727">
    <property type="entry name" value="oligo_HPY"/>
    <property type="match status" value="1"/>
</dbReference>
<dbReference type="PANTHER" id="PTHR43776:SF7">
    <property type="entry name" value="D,D-DIPEPTIDE TRANSPORT ATP-BINDING PROTEIN DDPF-RELATED"/>
    <property type="match status" value="1"/>
</dbReference>
<dbReference type="PANTHER" id="PTHR43776">
    <property type="entry name" value="TRANSPORT ATP-BINDING PROTEIN"/>
    <property type="match status" value="1"/>
</dbReference>
<dbReference type="Pfam" id="PF00005">
    <property type="entry name" value="ABC_tran"/>
    <property type="match status" value="1"/>
</dbReference>
<dbReference type="Pfam" id="PF08352">
    <property type="entry name" value="oligo_HPY"/>
    <property type="match status" value="1"/>
</dbReference>
<dbReference type="SMART" id="SM00382">
    <property type="entry name" value="AAA"/>
    <property type="match status" value="1"/>
</dbReference>
<dbReference type="SUPFAM" id="SSF52540">
    <property type="entry name" value="P-loop containing nucleoside triphosphate hydrolases"/>
    <property type="match status" value="1"/>
</dbReference>
<dbReference type="PROSITE" id="PS00211">
    <property type="entry name" value="ABC_TRANSPORTER_1"/>
    <property type="match status" value="1"/>
</dbReference>
<dbReference type="PROSITE" id="PS50893">
    <property type="entry name" value="ABC_TRANSPORTER_2"/>
    <property type="match status" value="1"/>
</dbReference>
<comment type="function">
    <text evidence="1">Probably part of an ABC transporter complex that could be involved in peptide import. Probably responsible for energy coupling to the transport system (By similarity).</text>
</comment>
<comment type="subunit">
    <text evidence="3">The complex is composed of two ATP-binding proteins (BAB2_0817 and BAB2_0818), two transmembrane proteins (BAB2_0815) and a solute-binding protein (BAB2_0812).</text>
</comment>
<comment type="subcellular location">
    <subcellularLocation>
        <location evidence="3">Cell inner membrane</location>
        <topology evidence="3">Peripheral membrane protein</topology>
    </subcellularLocation>
</comment>
<comment type="similarity">
    <text evidence="3">Belongs to the ABC transporter superfamily.</text>
</comment>
<organism>
    <name type="scientific">Brucella abortus (strain 2308)</name>
    <dbReference type="NCBI Taxonomy" id="359391"/>
    <lineage>
        <taxon>Bacteria</taxon>
        <taxon>Pseudomonadati</taxon>
        <taxon>Pseudomonadota</taxon>
        <taxon>Alphaproteobacteria</taxon>
        <taxon>Hyphomicrobiales</taxon>
        <taxon>Brucellaceae</taxon>
        <taxon>Brucella/Ochrobactrum group</taxon>
        <taxon>Brucella</taxon>
    </lineage>
</organism>
<keyword id="KW-0067">ATP-binding</keyword>
<keyword id="KW-0997">Cell inner membrane</keyword>
<keyword id="KW-1003">Cell membrane</keyword>
<keyword id="KW-0472">Membrane</keyword>
<keyword id="KW-0547">Nucleotide-binding</keyword>
<keyword id="KW-0571">Peptide transport</keyword>
<keyword id="KW-0653">Protein transport</keyword>
<keyword id="KW-1185">Reference proteome</keyword>
<keyword id="KW-1278">Translocase</keyword>
<keyword id="KW-0813">Transport</keyword>
<evidence type="ECO:0000250" key="1"/>
<evidence type="ECO:0000255" key="2">
    <source>
        <dbReference type="PROSITE-ProRule" id="PRU00434"/>
    </source>
</evidence>
<evidence type="ECO:0000305" key="3"/>
<sequence>MTETPLLSVRGLAKHYQTRSATLKILDNVSFDIARGEVVGLVGESGSGKTTIGRSVLRLIEPTAGQIMFDGADVATLSAREMRRQRRRMQYIFQDPFASLSPRMTIGEILMEGLNIQGIGTKAERLERARKALEQVELPPDTINRYAHEFSGGQRQRIGIARALTLEPDFIVADEPVSALDVSIQAQVVNLLRDLQQRLGLTMLFISHDLAVVEYICDRVIVLYLGRIMEIASSEDLYARPQHPYTRALLSAIPSPDPDARTERQILRGDIPSPANPPSGCVFRTRCPMAIDACATTVPQLREVRPGHFKACIRDNI</sequence>
<gene>
    <name type="ordered locus">BAB2_0818</name>
</gene>
<protein>
    <recommendedName>
        <fullName>Putative peptide import ATP-binding protein BAB2_0818</fullName>
        <ecNumber>7.4.2.-</ecNumber>
    </recommendedName>
</protein>
<proteinExistence type="inferred from homology"/>
<name>Y3318_BRUA2</name>
<reference key="1">
    <citation type="journal article" date="2005" name="Infect. Immun.">
        <title>Whole-genome analyses of speciation events in pathogenic Brucellae.</title>
        <authorList>
            <person name="Chain P.S."/>
            <person name="Comerci D.J."/>
            <person name="Tolmasky M.E."/>
            <person name="Larimer F.W."/>
            <person name="Malfatti S.A."/>
            <person name="Vergez L.M."/>
            <person name="Aguero F."/>
            <person name="Land M.L."/>
            <person name="Ugalde R.A."/>
            <person name="Garcia E."/>
        </authorList>
    </citation>
    <scope>NUCLEOTIDE SEQUENCE [LARGE SCALE GENOMIC DNA]</scope>
    <source>
        <strain>2308</strain>
    </source>
</reference>
<accession>Q2YK62</accession>